<gene>
    <name evidence="1" type="primary">pepA</name>
    <name type="synonym">pepB</name>
    <name type="ordered locus">Cgl2205</name>
    <name type="ordered locus">cg2419</name>
</gene>
<comment type="function">
    <text evidence="1">Presumably involved in the processing and regular turnover of intracellular proteins. Catalyzes the removal of unsubstituted N-terminal amino acids from various peptides.</text>
</comment>
<comment type="catalytic activity">
    <reaction evidence="1">
        <text>Release of an N-terminal amino acid, Xaa-|-Yaa-, in which Xaa is preferably Leu, but may be other amino acids including Pro although not Arg or Lys, and Yaa may be Pro. Amino acid amides and methyl esters are also readily hydrolyzed, but rates on arylamides are exceedingly low.</text>
        <dbReference type="EC" id="3.4.11.1"/>
    </reaction>
</comment>
<comment type="catalytic activity">
    <reaction evidence="1">
        <text>Release of an N-terminal amino acid, preferentially leucine, but not glutamic or aspartic acids.</text>
        <dbReference type="EC" id="3.4.11.10"/>
    </reaction>
</comment>
<comment type="cofactor">
    <cofactor evidence="1">
        <name>Mn(2+)</name>
        <dbReference type="ChEBI" id="CHEBI:29035"/>
    </cofactor>
    <text evidence="1">Binds 2 manganese ions per subunit.</text>
</comment>
<comment type="subcellular location">
    <subcellularLocation>
        <location evidence="1">Cytoplasm</location>
    </subcellularLocation>
</comment>
<comment type="similarity">
    <text evidence="1">Belongs to the peptidase M17 family.</text>
</comment>
<comment type="sequence caution" evidence="2">
    <conflict type="erroneous initiation">
        <sequence resource="EMBL-CDS" id="CAF20545"/>
    </conflict>
</comment>
<keyword id="KW-0031">Aminopeptidase</keyword>
<keyword id="KW-0963">Cytoplasm</keyword>
<keyword id="KW-0378">Hydrolase</keyword>
<keyword id="KW-0464">Manganese</keyword>
<keyword id="KW-0479">Metal-binding</keyword>
<keyword id="KW-0645">Protease</keyword>
<keyword id="KW-1185">Reference proteome</keyword>
<proteinExistence type="inferred from homology"/>
<name>AMPA_CORGL</name>
<sequence length="500" mass="52788">MSKDATLPVRGTVAELKLEKKLPKKIDAIIVAIFEGEDSIELAGGEILDFIFSTEQQADILTQLEAVGAKATANSITRVPGTDVAPVIAVGLGKADLLDDETLRRASGTAARSLGGFENVATTIGDLGLAAAVTGFGLGSYSYAGLRKETEESKDKTTTVTFISTGKDDKDVFVEAQIIVESVLLARDLVNTPSSHLYPESYSVIASNEASKHGLQTTILDEKQLADQGFGGILAVGNGSSRKPRLLRIDWKPRKAKKSIALVGKGITFDTGGISIKPGASMENMISDMGGSASVLATIIAAARLNLSINVSAFLPMAENMPSGDAFRPGDVITHFGGITSEILNTDAEGRLILADAIAYASEDKPDYLIDAATLTGAQLVALGLRTSGVMGTDEFRDSVAKTGREVGEQAWAMPLPEELDEQVKSPVADLRNVTNSRFAGMSAAGRYLQEFVGADIEWAHVDIAGPAYNTAGEFGYTPKRATGQPVRTFVQVLKDLSES</sequence>
<reference key="1">
    <citation type="journal article" date="2003" name="Appl. Microbiol. Biotechnol.">
        <title>The Corynebacterium glutamicum genome: features and impacts on biotechnological processes.</title>
        <authorList>
            <person name="Ikeda M."/>
            <person name="Nakagawa S."/>
        </authorList>
    </citation>
    <scope>NUCLEOTIDE SEQUENCE [LARGE SCALE GENOMIC DNA]</scope>
    <source>
        <strain>ATCC 13032 / DSM 20300 / JCM 1318 / BCRC 11384 / CCUG 27702 / LMG 3730 / NBRC 12168 / NCIMB 10025 / NRRL B-2784 / 534</strain>
    </source>
</reference>
<reference key="2">
    <citation type="journal article" date="2003" name="J. Biotechnol.">
        <title>The complete Corynebacterium glutamicum ATCC 13032 genome sequence and its impact on the production of L-aspartate-derived amino acids and vitamins.</title>
        <authorList>
            <person name="Kalinowski J."/>
            <person name="Bathe B."/>
            <person name="Bartels D."/>
            <person name="Bischoff N."/>
            <person name="Bott M."/>
            <person name="Burkovski A."/>
            <person name="Dusch N."/>
            <person name="Eggeling L."/>
            <person name="Eikmanns B.J."/>
            <person name="Gaigalat L."/>
            <person name="Goesmann A."/>
            <person name="Hartmann M."/>
            <person name="Huthmacher K."/>
            <person name="Kraemer R."/>
            <person name="Linke B."/>
            <person name="McHardy A.C."/>
            <person name="Meyer F."/>
            <person name="Moeckel B."/>
            <person name="Pfefferle W."/>
            <person name="Puehler A."/>
            <person name="Rey D.A."/>
            <person name="Rueckert C."/>
            <person name="Rupp O."/>
            <person name="Sahm H."/>
            <person name="Wendisch V.F."/>
            <person name="Wiegraebe I."/>
            <person name="Tauch A."/>
        </authorList>
    </citation>
    <scope>NUCLEOTIDE SEQUENCE [LARGE SCALE GENOMIC DNA]</scope>
    <source>
        <strain>ATCC 13032 / DSM 20300 / JCM 1318 / BCRC 11384 / CCUG 27702 / LMG 3730 / NBRC 12168 / NCIMB 10025 / NRRL B-2784 / 534</strain>
    </source>
</reference>
<dbReference type="EC" id="3.4.11.1" evidence="1"/>
<dbReference type="EC" id="3.4.11.10" evidence="1"/>
<dbReference type="EMBL" id="BA000036">
    <property type="protein sequence ID" value="BAB99598.1"/>
    <property type="molecule type" value="Genomic_DNA"/>
</dbReference>
<dbReference type="EMBL" id="BX927154">
    <property type="protein sequence ID" value="CAF20545.1"/>
    <property type="status" value="ALT_INIT"/>
    <property type="molecule type" value="Genomic_DNA"/>
</dbReference>
<dbReference type="RefSeq" id="NP_601408.2">
    <property type="nucleotide sequence ID" value="NC_003450.3"/>
</dbReference>
<dbReference type="RefSeq" id="WP_011014957.1">
    <property type="nucleotide sequence ID" value="NC_003450.3"/>
</dbReference>
<dbReference type="SMR" id="Q8NNJ4"/>
<dbReference type="STRING" id="196627.cg2419"/>
<dbReference type="GeneID" id="1020156"/>
<dbReference type="KEGG" id="cgb:cg2419"/>
<dbReference type="KEGG" id="cgl:Cgl2205"/>
<dbReference type="PATRIC" id="fig|196627.13.peg.2140"/>
<dbReference type="eggNOG" id="COG0260">
    <property type="taxonomic scope" value="Bacteria"/>
</dbReference>
<dbReference type="HOGENOM" id="CLU_013734_2_0_11"/>
<dbReference type="OrthoDB" id="9809354at2"/>
<dbReference type="BioCyc" id="CORYNE:G18NG-11797-MONOMER"/>
<dbReference type="Proteomes" id="UP000000582">
    <property type="component" value="Chromosome"/>
</dbReference>
<dbReference type="Proteomes" id="UP000001009">
    <property type="component" value="Chromosome"/>
</dbReference>
<dbReference type="GO" id="GO:0005737">
    <property type="term" value="C:cytoplasm"/>
    <property type="evidence" value="ECO:0007669"/>
    <property type="project" value="UniProtKB-SubCell"/>
</dbReference>
<dbReference type="GO" id="GO:0030145">
    <property type="term" value="F:manganese ion binding"/>
    <property type="evidence" value="ECO:0007669"/>
    <property type="project" value="UniProtKB-UniRule"/>
</dbReference>
<dbReference type="GO" id="GO:0070006">
    <property type="term" value="F:metalloaminopeptidase activity"/>
    <property type="evidence" value="ECO:0007669"/>
    <property type="project" value="InterPro"/>
</dbReference>
<dbReference type="GO" id="GO:0006508">
    <property type="term" value="P:proteolysis"/>
    <property type="evidence" value="ECO:0007669"/>
    <property type="project" value="UniProtKB-KW"/>
</dbReference>
<dbReference type="CDD" id="cd00433">
    <property type="entry name" value="Peptidase_M17"/>
    <property type="match status" value="1"/>
</dbReference>
<dbReference type="Gene3D" id="3.40.220.10">
    <property type="entry name" value="Leucine Aminopeptidase, subunit E, domain 1"/>
    <property type="match status" value="1"/>
</dbReference>
<dbReference type="Gene3D" id="3.40.630.10">
    <property type="entry name" value="Zn peptidases"/>
    <property type="match status" value="1"/>
</dbReference>
<dbReference type="HAMAP" id="MF_00181">
    <property type="entry name" value="Cytosol_peptidase_M17"/>
    <property type="match status" value="1"/>
</dbReference>
<dbReference type="InterPro" id="IPR011356">
    <property type="entry name" value="Leucine_aapep/pepB"/>
</dbReference>
<dbReference type="InterPro" id="IPR043472">
    <property type="entry name" value="Macro_dom-like"/>
</dbReference>
<dbReference type="InterPro" id="IPR000819">
    <property type="entry name" value="Peptidase_M17_C"/>
</dbReference>
<dbReference type="InterPro" id="IPR023042">
    <property type="entry name" value="Peptidase_M17_leu_NH2_pept"/>
</dbReference>
<dbReference type="InterPro" id="IPR008283">
    <property type="entry name" value="Peptidase_M17_N"/>
</dbReference>
<dbReference type="NCBIfam" id="NF002073">
    <property type="entry name" value="PRK00913.1-2"/>
    <property type="match status" value="1"/>
</dbReference>
<dbReference type="PANTHER" id="PTHR11963:SF23">
    <property type="entry name" value="CYTOSOL AMINOPEPTIDASE"/>
    <property type="match status" value="1"/>
</dbReference>
<dbReference type="PANTHER" id="PTHR11963">
    <property type="entry name" value="LEUCINE AMINOPEPTIDASE-RELATED"/>
    <property type="match status" value="1"/>
</dbReference>
<dbReference type="Pfam" id="PF00883">
    <property type="entry name" value="Peptidase_M17"/>
    <property type="match status" value="1"/>
</dbReference>
<dbReference type="Pfam" id="PF02789">
    <property type="entry name" value="Peptidase_M17_N"/>
    <property type="match status" value="1"/>
</dbReference>
<dbReference type="PRINTS" id="PR00481">
    <property type="entry name" value="LAMNOPPTDASE"/>
</dbReference>
<dbReference type="SUPFAM" id="SSF52949">
    <property type="entry name" value="Macro domain-like"/>
    <property type="match status" value="1"/>
</dbReference>
<dbReference type="SUPFAM" id="SSF53187">
    <property type="entry name" value="Zn-dependent exopeptidases"/>
    <property type="match status" value="1"/>
</dbReference>
<dbReference type="PROSITE" id="PS00631">
    <property type="entry name" value="CYTOSOL_AP"/>
    <property type="match status" value="1"/>
</dbReference>
<protein>
    <recommendedName>
        <fullName evidence="1">Probable cytosol aminopeptidase</fullName>
        <ecNumber evidence="1">3.4.11.1</ecNumber>
    </recommendedName>
    <alternativeName>
        <fullName evidence="1">Leucine aminopeptidase</fullName>
        <shortName evidence="1">LAP</shortName>
        <ecNumber evidence="1">3.4.11.10</ecNumber>
    </alternativeName>
    <alternativeName>
        <fullName evidence="1">Leucyl aminopeptidase</fullName>
    </alternativeName>
</protein>
<evidence type="ECO:0000255" key="1">
    <source>
        <dbReference type="HAMAP-Rule" id="MF_00181"/>
    </source>
</evidence>
<evidence type="ECO:0000305" key="2"/>
<organism>
    <name type="scientific">Corynebacterium glutamicum (strain ATCC 13032 / DSM 20300 / JCM 1318 / BCRC 11384 / CCUG 27702 / LMG 3730 / NBRC 12168 / NCIMB 10025 / NRRL B-2784 / 534)</name>
    <dbReference type="NCBI Taxonomy" id="196627"/>
    <lineage>
        <taxon>Bacteria</taxon>
        <taxon>Bacillati</taxon>
        <taxon>Actinomycetota</taxon>
        <taxon>Actinomycetes</taxon>
        <taxon>Mycobacteriales</taxon>
        <taxon>Corynebacteriaceae</taxon>
        <taxon>Corynebacterium</taxon>
    </lineage>
</organism>
<accession>Q8NNJ4</accession>
<feature type="chain" id="PRO_0000165747" description="Probable cytosol aminopeptidase">
    <location>
        <begin position="1"/>
        <end position="500"/>
    </location>
</feature>
<feature type="active site" evidence="1">
    <location>
        <position position="277"/>
    </location>
</feature>
<feature type="active site" evidence="1">
    <location>
        <position position="351"/>
    </location>
</feature>
<feature type="binding site" evidence="1">
    <location>
        <position position="265"/>
    </location>
    <ligand>
        <name>Mn(2+)</name>
        <dbReference type="ChEBI" id="CHEBI:29035"/>
        <label>2</label>
    </ligand>
</feature>
<feature type="binding site" evidence="1">
    <location>
        <position position="270"/>
    </location>
    <ligand>
        <name>Mn(2+)</name>
        <dbReference type="ChEBI" id="CHEBI:29035"/>
        <label>1</label>
    </ligand>
</feature>
<feature type="binding site" evidence="1">
    <location>
        <position position="270"/>
    </location>
    <ligand>
        <name>Mn(2+)</name>
        <dbReference type="ChEBI" id="CHEBI:29035"/>
        <label>2</label>
    </ligand>
</feature>
<feature type="binding site" evidence="1">
    <location>
        <position position="288"/>
    </location>
    <ligand>
        <name>Mn(2+)</name>
        <dbReference type="ChEBI" id="CHEBI:29035"/>
        <label>2</label>
    </ligand>
</feature>
<feature type="binding site" evidence="1">
    <location>
        <position position="347"/>
    </location>
    <ligand>
        <name>Mn(2+)</name>
        <dbReference type="ChEBI" id="CHEBI:29035"/>
        <label>1</label>
    </ligand>
</feature>
<feature type="binding site" evidence="1">
    <location>
        <position position="349"/>
    </location>
    <ligand>
        <name>Mn(2+)</name>
        <dbReference type="ChEBI" id="CHEBI:29035"/>
        <label>1</label>
    </ligand>
</feature>
<feature type="binding site" evidence="1">
    <location>
        <position position="349"/>
    </location>
    <ligand>
        <name>Mn(2+)</name>
        <dbReference type="ChEBI" id="CHEBI:29035"/>
        <label>2</label>
    </ligand>
</feature>